<proteinExistence type="evidence at protein level"/>
<evidence type="ECO:0000255" key="1">
    <source>
        <dbReference type="PROSITE-ProRule" id="PRU00238"/>
    </source>
</evidence>
<accession>P0C240</accession>
<name>HBB_POGSC</name>
<comment type="function">
    <text>Involved in oxygen transport from gills to the various peripheral tissues.</text>
</comment>
<comment type="subunit">
    <text>Heterotetramer of two alpha chains and two beta chains.</text>
</comment>
<comment type="tissue specificity">
    <text>Red blood cells.</text>
</comment>
<comment type="similarity">
    <text evidence="1">Belongs to the globin family.</text>
</comment>
<dbReference type="SMR" id="P0C240"/>
<dbReference type="GO" id="GO:0072562">
    <property type="term" value="C:blood microparticle"/>
    <property type="evidence" value="ECO:0007669"/>
    <property type="project" value="TreeGrafter"/>
</dbReference>
<dbReference type="GO" id="GO:0031838">
    <property type="term" value="C:haptoglobin-hemoglobin complex"/>
    <property type="evidence" value="ECO:0007669"/>
    <property type="project" value="TreeGrafter"/>
</dbReference>
<dbReference type="GO" id="GO:0005833">
    <property type="term" value="C:hemoglobin complex"/>
    <property type="evidence" value="ECO:0007669"/>
    <property type="project" value="InterPro"/>
</dbReference>
<dbReference type="GO" id="GO:0031720">
    <property type="term" value="F:haptoglobin binding"/>
    <property type="evidence" value="ECO:0007669"/>
    <property type="project" value="TreeGrafter"/>
</dbReference>
<dbReference type="GO" id="GO:0020037">
    <property type="term" value="F:heme binding"/>
    <property type="evidence" value="ECO:0007669"/>
    <property type="project" value="InterPro"/>
</dbReference>
<dbReference type="GO" id="GO:0046872">
    <property type="term" value="F:metal ion binding"/>
    <property type="evidence" value="ECO:0007669"/>
    <property type="project" value="UniProtKB-KW"/>
</dbReference>
<dbReference type="GO" id="GO:0043177">
    <property type="term" value="F:organic acid binding"/>
    <property type="evidence" value="ECO:0007669"/>
    <property type="project" value="TreeGrafter"/>
</dbReference>
<dbReference type="GO" id="GO:0019825">
    <property type="term" value="F:oxygen binding"/>
    <property type="evidence" value="ECO:0007669"/>
    <property type="project" value="InterPro"/>
</dbReference>
<dbReference type="GO" id="GO:0005344">
    <property type="term" value="F:oxygen carrier activity"/>
    <property type="evidence" value="ECO:0007669"/>
    <property type="project" value="UniProtKB-KW"/>
</dbReference>
<dbReference type="GO" id="GO:0004601">
    <property type="term" value="F:peroxidase activity"/>
    <property type="evidence" value="ECO:0007669"/>
    <property type="project" value="TreeGrafter"/>
</dbReference>
<dbReference type="GO" id="GO:0042744">
    <property type="term" value="P:hydrogen peroxide catabolic process"/>
    <property type="evidence" value="ECO:0007669"/>
    <property type="project" value="TreeGrafter"/>
</dbReference>
<dbReference type="CDD" id="cd08925">
    <property type="entry name" value="Hb-beta-like"/>
    <property type="match status" value="1"/>
</dbReference>
<dbReference type="FunFam" id="1.10.490.10:FF:000001">
    <property type="entry name" value="Hemoglobin subunit beta"/>
    <property type="match status" value="1"/>
</dbReference>
<dbReference type="Gene3D" id="1.10.490.10">
    <property type="entry name" value="Globins"/>
    <property type="match status" value="1"/>
</dbReference>
<dbReference type="InterPro" id="IPR000971">
    <property type="entry name" value="Globin"/>
</dbReference>
<dbReference type="InterPro" id="IPR009050">
    <property type="entry name" value="Globin-like_sf"/>
</dbReference>
<dbReference type="InterPro" id="IPR012292">
    <property type="entry name" value="Globin/Proto"/>
</dbReference>
<dbReference type="InterPro" id="IPR002337">
    <property type="entry name" value="Hemoglobin_b"/>
</dbReference>
<dbReference type="InterPro" id="IPR050056">
    <property type="entry name" value="Hemoglobin_oxygen_transport"/>
</dbReference>
<dbReference type="PANTHER" id="PTHR11442">
    <property type="entry name" value="HEMOGLOBIN FAMILY MEMBER"/>
    <property type="match status" value="1"/>
</dbReference>
<dbReference type="PANTHER" id="PTHR11442:SF7">
    <property type="entry name" value="HEMOGLOBIN SUBUNIT EPSILON"/>
    <property type="match status" value="1"/>
</dbReference>
<dbReference type="Pfam" id="PF00042">
    <property type="entry name" value="Globin"/>
    <property type="match status" value="1"/>
</dbReference>
<dbReference type="PRINTS" id="PR00814">
    <property type="entry name" value="BETAHAEM"/>
</dbReference>
<dbReference type="SUPFAM" id="SSF46458">
    <property type="entry name" value="Globin-like"/>
    <property type="match status" value="1"/>
</dbReference>
<dbReference type="PROSITE" id="PS01033">
    <property type="entry name" value="GLOBIN"/>
    <property type="match status" value="1"/>
</dbReference>
<organism>
    <name type="scientific">Pogonophryne scotti</name>
    <name type="common">Saddleback plunderfish</name>
    <name type="synonym">Antarctic fish</name>
    <dbReference type="NCBI Taxonomy" id="36210"/>
    <lineage>
        <taxon>Eukaryota</taxon>
        <taxon>Metazoa</taxon>
        <taxon>Chordata</taxon>
        <taxon>Craniata</taxon>
        <taxon>Vertebrata</taxon>
        <taxon>Euteleostomi</taxon>
        <taxon>Actinopterygii</taxon>
        <taxon>Neopterygii</taxon>
        <taxon>Teleostei</taxon>
        <taxon>Neoteleostei</taxon>
        <taxon>Acanthomorphata</taxon>
        <taxon>Eupercaria</taxon>
        <taxon>Perciformes</taxon>
        <taxon>Notothenioidei</taxon>
        <taxon>Pogonophryne</taxon>
    </lineage>
</organism>
<protein>
    <recommendedName>
        <fullName>Hemoglobin subunit beta</fullName>
    </recommendedName>
    <alternativeName>
        <fullName>Beta-globin</fullName>
    </alternativeName>
    <alternativeName>
        <fullName>Hemoglobin beta chain</fullName>
    </alternativeName>
</protein>
<reference key="1">
    <citation type="journal article" date="1998" name="J. Biol. Chem.">
        <title>The hemoglobins of the antarctic fishes Atedidraco orianae and Pogonophryne scotti. Amino acid sequence, lack of cooperativity, and ligand binding properties.</title>
        <authorList>
            <person name="Tamburrini M."/>
            <person name="Romano M."/>
            <person name="Carratore V."/>
            <person name="Kunzmann A."/>
            <person name="Coletta M."/>
            <person name="di Prisco G."/>
        </authorList>
    </citation>
    <scope>PROTEIN SEQUENCE</scope>
</reference>
<keyword id="KW-0903">Direct protein sequencing</keyword>
<keyword id="KW-0349">Heme</keyword>
<keyword id="KW-0408">Iron</keyword>
<keyword id="KW-0479">Metal-binding</keyword>
<keyword id="KW-0561">Oxygen transport</keyword>
<keyword id="KW-0813">Transport</keyword>
<gene>
    <name type="primary">hbb</name>
</gene>
<sequence>VQWSESERTIINGIFSHLDYDDLGPKAFSRCLIVYPWTQRYFSSFGNLHNAEAIMGNANVAAHGIKVLHGLDLGLKHMDDIMGAYAELSSLHSEKLHVDPDNFKLLSDCIIIAVAAKLGNAFTPETQAAFHKFLAVVVSALGKQYH</sequence>
<feature type="chain" id="PRO_0000260299" description="Hemoglobin subunit beta">
    <location>
        <begin position="1"/>
        <end position="146"/>
    </location>
</feature>
<feature type="domain" description="Globin" evidence="1">
    <location>
        <begin position="2"/>
        <end position="146"/>
    </location>
</feature>
<feature type="binding site" description="distal binding residue">
    <location>
        <position position="63"/>
    </location>
    <ligand>
        <name>heme b</name>
        <dbReference type="ChEBI" id="CHEBI:60344"/>
    </ligand>
    <ligandPart>
        <name>Fe</name>
        <dbReference type="ChEBI" id="CHEBI:18248"/>
    </ligandPart>
</feature>
<feature type="binding site" description="proximal binding residue">
    <location>
        <position position="92"/>
    </location>
    <ligand>
        <name>heme b</name>
        <dbReference type="ChEBI" id="CHEBI:60344"/>
    </ligand>
    <ligandPart>
        <name>Fe</name>
        <dbReference type="ChEBI" id="CHEBI:18248"/>
    </ligandPart>
</feature>